<keyword id="KW-0067">ATP-binding</keyword>
<keyword id="KW-0418">Kinase</keyword>
<keyword id="KW-0460">Magnesium</keyword>
<keyword id="KW-0479">Metal-binding</keyword>
<keyword id="KW-0547">Nucleotide-binding</keyword>
<keyword id="KW-1185">Reference proteome</keyword>
<keyword id="KW-0784">Thiamine biosynthesis</keyword>
<keyword id="KW-0808">Transferase</keyword>
<accession>Q8XE87</accession>
<accession>Q7AH12</accession>
<reference key="1">
    <citation type="journal article" date="2001" name="Nature">
        <title>Genome sequence of enterohaemorrhagic Escherichia coli O157:H7.</title>
        <authorList>
            <person name="Perna N.T."/>
            <person name="Plunkett G. III"/>
            <person name="Burland V."/>
            <person name="Mau B."/>
            <person name="Glasner J.D."/>
            <person name="Rose D.J."/>
            <person name="Mayhew G.F."/>
            <person name="Evans P.S."/>
            <person name="Gregor J."/>
            <person name="Kirkpatrick H.A."/>
            <person name="Posfai G."/>
            <person name="Hackett J."/>
            <person name="Klink S."/>
            <person name="Boutin A."/>
            <person name="Shao Y."/>
            <person name="Miller L."/>
            <person name="Grotbeck E.J."/>
            <person name="Davis N.W."/>
            <person name="Lim A."/>
            <person name="Dimalanta E.T."/>
            <person name="Potamousis K."/>
            <person name="Apodaca J."/>
            <person name="Anantharaman T.S."/>
            <person name="Lin J."/>
            <person name="Yen G."/>
            <person name="Schwartz D.C."/>
            <person name="Welch R.A."/>
            <person name="Blattner F.R."/>
        </authorList>
    </citation>
    <scope>NUCLEOTIDE SEQUENCE [LARGE SCALE GENOMIC DNA]</scope>
    <source>
        <strain>O157:H7 / EDL933 / ATCC 700927 / EHEC</strain>
    </source>
</reference>
<reference key="2">
    <citation type="journal article" date="2001" name="DNA Res.">
        <title>Complete genome sequence of enterohemorrhagic Escherichia coli O157:H7 and genomic comparison with a laboratory strain K-12.</title>
        <authorList>
            <person name="Hayashi T."/>
            <person name="Makino K."/>
            <person name="Ohnishi M."/>
            <person name="Kurokawa K."/>
            <person name="Ishii K."/>
            <person name="Yokoyama K."/>
            <person name="Han C.-G."/>
            <person name="Ohtsubo E."/>
            <person name="Nakayama K."/>
            <person name="Murata T."/>
            <person name="Tanaka M."/>
            <person name="Tobe T."/>
            <person name="Iida T."/>
            <person name="Takami H."/>
            <person name="Honda T."/>
            <person name="Sasakawa C."/>
            <person name="Ogasawara N."/>
            <person name="Yasunaga T."/>
            <person name="Kuhara S."/>
            <person name="Shiba T."/>
            <person name="Hattori M."/>
            <person name="Shinagawa H."/>
        </authorList>
    </citation>
    <scope>NUCLEOTIDE SEQUENCE [LARGE SCALE GENOMIC DNA]</scope>
    <source>
        <strain>O157:H7 / Sakai / RIMD 0509952 / EHEC</strain>
    </source>
</reference>
<organism>
    <name type="scientific">Escherichia coli O157:H7</name>
    <dbReference type="NCBI Taxonomy" id="83334"/>
    <lineage>
        <taxon>Bacteria</taxon>
        <taxon>Pseudomonadati</taxon>
        <taxon>Pseudomonadota</taxon>
        <taxon>Gammaproteobacteria</taxon>
        <taxon>Enterobacterales</taxon>
        <taxon>Enterobacteriaceae</taxon>
        <taxon>Escherichia</taxon>
    </lineage>
</organism>
<gene>
    <name evidence="1" type="primary">thiL</name>
    <name type="ordered locus">Z0519</name>
    <name type="ordered locus">ECs0470</name>
</gene>
<name>THIL_ECO57</name>
<comment type="function">
    <text evidence="1">Catalyzes the ATP-dependent phosphorylation of thiamine-monophosphate (TMP) to form thiamine-pyrophosphate (TPP), the active form of vitamin B1.</text>
</comment>
<comment type="catalytic activity">
    <reaction evidence="1">
        <text>thiamine phosphate + ATP = thiamine diphosphate + ADP</text>
        <dbReference type="Rhea" id="RHEA:15913"/>
        <dbReference type="ChEBI" id="CHEBI:30616"/>
        <dbReference type="ChEBI" id="CHEBI:37575"/>
        <dbReference type="ChEBI" id="CHEBI:58937"/>
        <dbReference type="ChEBI" id="CHEBI:456216"/>
        <dbReference type="EC" id="2.7.4.16"/>
    </reaction>
</comment>
<comment type="pathway">
    <text evidence="1">Cofactor biosynthesis; thiamine diphosphate biosynthesis; thiamine diphosphate from thiamine phosphate: step 1/1.</text>
</comment>
<comment type="miscellaneous">
    <text evidence="1">Reaction mechanism of ThiL seems to utilize a direct, inline transfer of the gamma-phosphate of ATP to TMP rather than a phosphorylated enzyme intermediate.</text>
</comment>
<comment type="similarity">
    <text evidence="1">Belongs to the thiamine-monophosphate kinase family.</text>
</comment>
<protein>
    <recommendedName>
        <fullName evidence="1">Thiamine-monophosphate kinase</fullName>
        <shortName evidence="1">TMP kinase</shortName>
        <shortName evidence="1">Thiamine-phosphate kinase</shortName>
        <ecNumber evidence="1">2.7.4.16</ecNumber>
    </recommendedName>
</protein>
<feature type="chain" id="PRO_0000096195" description="Thiamine-monophosphate kinase">
    <location>
        <begin position="1"/>
        <end position="325"/>
    </location>
</feature>
<feature type="binding site" evidence="1">
    <location>
        <position position="30"/>
    </location>
    <ligand>
        <name>Mg(2+)</name>
        <dbReference type="ChEBI" id="CHEBI:18420"/>
        <label>3</label>
    </ligand>
</feature>
<feature type="binding site" evidence="1">
    <location>
        <position position="30"/>
    </location>
    <ligand>
        <name>Mg(2+)</name>
        <dbReference type="ChEBI" id="CHEBI:18420"/>
        <label>4</label>
    </ligand>
</feature>
<feature type="binding site" evidence="1">
    <location>
        <position position="45"/>
    </location>
    <ligand>
        <name>Mg(2+)</name>
        <dbReference type="ChEBI" id="CHEBI:18420"/>
        <label>4</label>
    </ligand>
</feature>
<feature type="binding site" evidence="1">
    <location>
        <position position="46"/>
    </location>
    <ligand>
        <name>Mg(2+)</name>
        <dbReference type="ChEBI" id="CHEBI:18420"/>
        <label>1</label>
    </ligand>
</feature>
<feature type="binding site" evidence="1">
    <location>
        <position position="47"/>
    </location>
    <ligand>
        <name>Mg(2+)</name>
        <dbReference type="ChEBI" id="CHEBI:18420"/>
        <label>1</label>
    </ligand>
</feature>
<feature type="binding site" evidence="1">
    <location>
        <position position="47"/>
    </location>
    <ligand>
        <name>Mg(2+)</name>
        <dbReference type="ChEBI" id="CHEBI:18420"/>
        <label>2</label>
    </ligand>
</feature>
<feature type="binding site" evidence="1">
    <location>
        <position position="54"/>
    </location>
    <ligand>
        <name>substrate</name>
    </ligand>
</feature>
<feature type="binding site" evidence="1">
    <location>
        <position position="75"/>
    </location>
    <ligand>
        <name>Mg(2+)</name>
        <dbReference type="ChEBI" id="CHEBI:18420"/>
        <label>2</label>
    </ligand>
</feature>
<feature type="binding site" evidence="1">
    <location>
        <position position="75"/>
    </location>
    <ligand>
        <name>Mg(2+)</name>
        <dbReference type="ChEBI" id="CHEBI:18420"/>
        <label>3</label>
    </ligand>
</feature>
<feature type="binding site" evidence="1">
    <location>
        <position position="75"/>
    </location>
    <ligand>
        <name>Mg(2+)</name>
        <dbReference type="ChEBI" id="CHEBI:18420"/>
        <label>4</label>
    </ligand>
</feature>
<feature type="binding site" evidence="1">
    <location>
        <begin position="121"/>
        <end position="122"/>
    </location>
    <ligand>
        <name>ATP</name>
        <dbReference type="ChEBI" id="CHEBI:30616"/>
    </ligand>
</feature>
<feature type="binding site" evidence="1">
    <location>
        <position position="122"/>
    </location>
    <ligand>
        <name>Mg(2+)</name>
        <dbReference type="ChEBI" id="CHEBI:18420"/>
        <label>1</label>
    </ligand>
</feature>
<feature type="binding site" evidence="1">
    <location>
        <position position="146"/>
    </location>
    <ligand>
        <name>ATP</name>
        <dbReference type="ChEBI" id="CHEBI:30616"/>
    </ligand>
</feature>
<feature type="binding site" evidence="1">
    <location>
        <position position="212"/>
    </location>
    <ligand>
        <name>Mg(2+)</name>
        <dbReference type="ChEBI" id="CHEBI:18420"/>
        <label>3</label>
    </ligand>
</feature>
<feature type="binding site" evidence="1">
    <location>
        <position position="214"/>
    </location>
    <ligand>
        <name>ATP</name>
        <dbReference type="ChEBI" id="CHEBI:30616"/>
    </ligand>
</feature>
<feature type="binding site" evidence="1">
    <location>
        <position position="215"/>
    </location>
    <ligand>
        <name>Mg(2+)</name>
        <dbReference type="ChEBI" id="CHEBI:18420"/>
        <label>5</label>
    </ligand>
</feature>
<feature type="binding site" evidence="1">
    <location>
        <position position="263"/>
    </location>
    <ligand>
        <name>substrate</name>
    </ligand>
</feature>
<feature type="binding site" evidence="1">
    <location>
        <position position="319"/>
    </location>
    <ligand>
        <name>substrate</name>
    </ligand>
</feature>
<proteinExistence type="inferred from homology"/>
<dbReference type="EC" id="2.7.4.16" evidence="1"/>
<dbReference type="EMBL" id="AE005174">
    <property type="protein sequence ID" value="AAG54766.1"/>
    <property type="molecule type" value="Genomic_DNA"/>
</dbReference>
<dbReference type="EMBL" id="BA000007">
    <property type="protein sequence ID" value="BAB33893.1"/>
    <property type="molecule type" value="Genomic_DNA"/>
</dbReference>
<dbReference type="PIR" id="B85538">
    <property type="entry name" value="B85538"/>
</dbReference>
<dbReference type="PIR" id="F90687">
    <property type="entry name" value="F90687"/>
</dbReference>
<dbReference type="RefSeq" id="NP_308497.1">
    <property type="nucleotide sequence ID" value="NC_002695.1"/>
</dbReference>
<dbReference type="RefSeq" id="WP_000742111.1">
    <property type="nucleotide sequence ID" value="NZ_VOAI01000005.1"/>
</dbReference>
<dbReference type="SMR" id="Q8XE87"/>
<dbReference type="STRING" id="155864.Z0519"/>
<dbReference type="GeneID" id="914572"/>
<dbReference type="KEGG" id="ece:Z0519"/>
<dbReference type="KEGG" id="ecs:ECs_0470"/>
<dbReference type="PATRIC" id="fig|386585.9.peg.570"/>
<dbReference type="eggNOG" id="COG0611">
    <property type="taxonomic scope" value="Bacteria"/>
</dbReference>
<dbReference type="HOGENOM" id="CLU_046964_3_0_6"/>
<dbReference type="OMA" id="HFRRDWS"/>
<dbReference type="UniPathway" id="UPA00060">
    <property type="reaction ID" value="UER00142"/>
</dbReference>
<dbReference type="Proteomes" id="UP000000558">
    <property type="component" value="Chromosome"/>
</dbReference>
<dbReference type="Proteomes" id="UP000002519">
    <property type="component" value="Chromosome"/>
</dbReference>
<dbReference type="GO" id="GO:0005524">
    <property type="term" value="F:ATP binding"/>
    <property type="evidence" value="ECO:0007669"/>
    <property type="project" value="UniProtKB-UniRule"/>
</dbReference>
<dbReference type="GO" id="GO:0000287">
    <property type="term" value="F:magnesium ion binding"/>
    <property type="evidence" value="ECO:0007669"/>
    <property type="project" value="UniProtKB-UniRule"/>
</dbReference>
<dbReference type="GO" id="GO:0009030">
    <property type="term" value="F:thiamine-phosphate kinase activity"/>
    <property type="evidence" value="ECO:0007669"/>
    <property type="project" value="UniProtKB-UniRule"/>
</dbReference>
<dbReference type="GO" id="GO:0009228">
    <property type="term" value="P:thiamine biosynthetic process"/>
    <property type="evidence" value="ECO:0007669"/>
    <property type="project" value="UniProtKB-KW"/>
</dbReference>
<dbReference type="GO" id="GO:0009229">
    <property type="term" value="P:thiamine diphosphate biosynthetic process"/>
    <property type="evidence" value="ECO:0007669"/>
    <property type="project" value="UniProtKB-UniRule"/>
</dbReference>
<dbReference type="CDD" id="cd02194">
    <property type="entry name" value="ThiL"/>
    <property type="match status" value="1"/>
</dbReference>
<dbReference type="FunFam" id="3.30.1330.10:FF:000008">
    <property type="entry name" value="Thiamine-monophosphate kinase"/>
    <property type="match status" value="1"/>
</dbReference>
<dbReference type="FunFam" id="3.90.650.10:FF:000012">
    <property type="entry name" value="Thiamine-monophosphate kinase"/>
    <property type="match status" value="1"/>
</dbReference>
<dbReference type="Gene3D" id="3.90.650.10">
    <property type="entry name" value="PurM-like C-terminal domain"/>
    <property type="match status" value="1"/>
</dbReference>
<dbReference type="Gene3D" id="3.30.1330.10">
    <property type="entry name" value="PurM-like, N-terminal domain"/>
    <property type="match status" value="1"/>
</dbReference>
<dbReference type="HAMAP" id="MF_02128">
    <property type="entry name" value="TMP_kinase"/>
    <property type="match status" value="1"/>
</dbReference>
<dbReference type="InterPro" id="IPR010918">
    <property type="entry name" value="PurM-like_C_dom"/>
</dbReference>
<dbReference type="InterPro" id="IPR036676">
    <property type="entry name" value="PurM-like_C_sf"/>
</dbReference>
<dbReference type="InterPro" id="IPR016188">
    <property type="entry name" value="PurM-like_N"/>
</dbReference>
<dbReference type="InterPro" id="IPR036921">
    <property type="entry name" value="PurM-like_N_sf"/>
</dbReference>
<dbReference type="InterPro" id="IPR006283">
    <property type="entry name" value="ThiL-like"/>
</dbReference>
<dbReference type="NCBIfam" id="NF004350">
    <property type="entry name" value="PRK05731.1-1"/>
    <property type="match status" value="1"/>
</dbReference>
<dbReference type="NCBIfam" id="TIGR01379">
    <property type="entry name" value="thiL"/>
    <property type="match status" value="1"/>
</dbReference>
<dbReference type="PANTHER" id="PTHR30270">
    <property type="entry name" value="THIAMINE-MONOPHOSPHATE KINASE"/>
    <property type="match status" value="1"/>
</dbReference>
<dbReference type="PANTHER" id="PTHR30270:SF0">
    <property type="entry name" value="THIAMINE-MONOPHOSPHATE KINASE"/>
    <property type="match status" value="1"/>
</dbReference>
<dbReference type="Pfam" id="PF00586">
    <property type="entry name" value="AIRS"/>
    <property type="match status" value="1"/>
</dbReference>
<dbReference type="Pfam" id="PF02769">
    <property type="entry name" value="AIRS_C"/>
    <property type="match status" value="1"/>
</dbReference>
<dbReference type="PIRSF" id="PIRSF005303">
    <property type="entry name" value="Thiam_monoph_kin"/>
    <property type="match status" value="1"/>
</dbReference>
<dbReference type="SUPFAM" id="SSF56042">
    <property type="entry name" value="PurM C-terminal domain-like"/>
    <property type="match status" value="1"/>
</dbReference>
<dbReference type="SUPFAM" id="SSF55326">
    <property type="entry name" value="PurM N-terminal domain-like"/>
    <property type="match status" value="1"/>
</dbReference>
<sequence>MACGEFSLIARYFDRVRSSRLDVELGIGDDCALLNIPEKQTLAISTDTLVAGNHFLPDIDPADLAYKALAVNLSDLAAMGADPAWLTLALTLPDVDEAWLESFSDSLFDLLNYYDMQLIGGDTTRGPLSMTLGIHGFVPMGRALTRSGAKPGDWIYVTGTPGDSAAGLAILQNRLQVADAKDADYLIKRHLRPSPRILQGQALRDLANSAIDLSDGLISDLGHIVKASDCGARIDLALLPFSDALSRHVVPEQALRWALSGGEDYELCFTVPELNRGALDVALGHLGVPFTCIGQMTADIEGLCFIRDGEPVTLDWKGYDHFATP</sequence>
<evidence type="ECO:0000255" key="1">
    <source>
        <dbReference type="HAMAP-Rule" id="MF_02128"/>
    </source>
</evidence>